<accession>O32216</accession>
<dbReference type="EMBL" id="AL009126">
    <property type="protein sequence ID" value="CAB15351.1"/>
    <property type="molecule type" value="Genomic_DNA"/>
</dbReference>
<dbReference type="PIR" id="A70041">
    <property type="entry name" value="A70041"/>
</dbReference>
<dbReference type="RefSeq" id="NP_391226.1">
    <property type="nucleotide sequence ID" value="NC_000964.3"/>
</dbReference>
<dbReference type="RefSeq" id="WP_003219999.1">
    <property type="nucleotide sequence ID" value="NZ_OZ025638.1"/>
</dbReference>
<dbReference type="SMR" id="O32216"/>
<dbReference type="FunCoup" id="O32216">
    <property type="interactions" value="214"/>
</dbReference>
<dbReference type="STRING" id="224308.BSU33460"/>
<dbReference type="PaxDb" id="224308-BSU33460"/>
<dbReference type="EnsemblBacteria" id="CAB15351">
    <property type="protein sequence ID" value="CAB15351"/>
    <property type="gene ID" value="BSU_33460"/>
</dbReference>
<dbReference type="GeneID" id="936011"/>
<dbReference type="KEGG" id="bsu:BSU33460"/>
<dbReference type="PATRIC" id="fig|224308.179.peg.3631"/>
<dbReference type="eggNOG" id="COG2860">
    <property type="taxonomic scope" value="Bacteria"/>
</dbReference>
<dbReference type="InParanoid" id="O32216"/>
<dbReference type="OrthoDB" id="9791874at2"/>
<dbReference type="PhylomeDB" id="O32216"/>
<dbReference type="BioCyc" id="BSUB:BSU33460-MONOMER"/>
<dbReference type="PRO" id="PR:O32216"/>
<dbReference type="Proteomes" id="UP000001570">
    <property type="component" value="Chromosome"/>
</dbReference>
<dbReference type="GO" id="GO:0005886">
    <property type="term" value="C:plasma membrane"/>
    <property type="evidence" value="ECO:0000318"/>
    <property type="project" value="GO_Central"/>
</dbReference>
<dbReference type="InterPro" id="IPR005115">
    <property type="entry name" value="Gly_transporter"/>
</dbReference>
<dbReference type="PANTHER" id="PTHR30506">
    <property type="entry name" value="INNER MEMBRANE PROTEIN"/>
    <property type="match status" value="1"/>
</dbReference>
<dbReference type="PANTHER" id="PTHR30506:SF3">
    <property type="entry name" value="UPF0126 INNER MEMBRANE PROTEIN YADS-RELATED"/>
    <property type="match status" value="1"/>
</dbReference>
<dbReference type="Pfam" id="PF03458">
    <property type="entry name" value="Gly_transporter"/>
    <property type="match status" value="2"/>
</dbReference>
<name>YVGT_BACSU</name>
<gene>
    <name type="primary">yvgT</name>
    <name type="ordered locus">BSU33460</name>
</gene>
<reference key="1">
    <citation type="journal article" date="1997" name="Nature">
        <title>The complete genome sequence of the Gram-positive bacterium Bacillus subtilis.</title>
        <authorList>
            <person name="Kunst F."/>
            <person name="Ogasawara N."/>
            <person name="Moszer I."/>
            <person name="Albertini A.M."/>
            <person name="Alloni G."/>
            <person name="Azevedo V."/>
            <person name="Bertero M.G."/>
            <person name="Bessieres P."/>
            <person name="Bolotin A."/>
            <person name="Borchert S."/>
            <person name="Borriss R."/>
            <person name="Boursier L."/>
            <person name="Brans A."/>
            <person name="Braun M."/>
            <person name="Brignell S.C."/>
            <person name="Bron S."/>
            <person name="Brouillet S."/>
            <person name="Bruschi C.V."/>
            <person name="Caldwell B."/>
            <person name="Capuano V."/>
            <person name="Carter N.M."/>
            <person name="Choi S.-K."/>
            <person name="Codani J.-J."/>
            <person name="Connerton I.F."/>
            <person name="Cummings N.J."/>
            <person name="Daniel R.A."/>
            <person name="Denizot F."/>
            <person name="Devine K.M."/>
            <person name="Duesterhoeft A."/>
            <person name="Ehrlich S.D."/>
            <person name="Emmerson P.T."/>
            <person name="Entian K.-D."/>
            <person name="Errington J."/>
            <person name="Fabret C."/>
            <person name="Ferrari E."/>
            <person name="Foulger D."/>
            <person name="Fritz C."/>
            <person name="Fujita M."/>
            <person name="Fujita Y."/>
            <person name="Fuma S."/>
            <person name="Galizzi A."/>
            <person name="Galleron N."/>
            <person name="Ghim S.-Y."/>
            <person name="Glaser P."/>
            <person name="Goffeau A."/>
            <person name="Golightly E.J."/>
            <person name="Grandi G."/>
            <person name="Guiseppi G."/>
            <person name="Guy B.J."/>
            <person name="Haga K."/>
            <person name="Haiech J."/>
            <person name="Harwood C.R."/>
            <person name="Henaut A."/>
            <person name="Hilbert H."/>
            <person name="Holsappel S."/>
            <person name="Hosono S."/>
            <person name="Hullo M.-F."/>
            <person name="Itaya M."/>
            <person name="Jones L.-M."/>
            <person name="Joris B."/>
            <person name="Karamata D."/>
            <person name="Kasahara Y."/>
            <person name="Klaerr-Blanchard M."/>
            <person name="Klein C."/>
            <person name="Kobayashi Y."/>
            <person name="Koetter P."/>
            <person name="Koningstein G."/>
            <person name="Krogh S."/>
            <person name="Kumano M."/>
            <person name="Kurita K."/>
            <person name="Lapidus A."/>
            <person name="Lardinois S."/>
            <person name="Lauber J."/>
            <person name="Lazarevic V."/>
            <person name="Lee S.-M."/>
            <person name="Levine A."/>
            <person name="Liu H."/>
            <person name="Masuda S."/>
            <person name="Mauel C."/>
            <person name="Medigue C."/>
            <person name="Medina N."/>
            <person name="Mellado R.P."/>
            <person name="Mizuno M."/>
            <person name="Moestl D."/>
            <person name="Nakai S."/>
            <person name="Noback M."/>
            <person name="Noone D."/>
            <person name="O'Reilly M."/>
            <person name="Ogawa K."/>
            <person name="Ogiwara A."/>
            <person name="Oudega B."/>
            <person name="Park S.-H."/>
            <person name="Parro V."/>
            <person name="Pohl T.M."/>
            <person name="Portetelle D."/>
            <person name="Porwollik S."/>
            <person name="Prescott A.M."/>
            <person name="Presecan E."/>
            <person name="Pujic P."/>
            <person name="Purnelle B."/>
            <person name="Rapoport G."/>
            <person name="Rey M."/>
            <person name="Reynolds S."/>
            <person name="Rieger M."/>
            <person name="Rivolta C."/>
            <person name="Rocha E."/>
            <person name="Roche B."/>
            <person name="Rose M."/>
            <person name="Sadaie Y."/>
            <person name="Sato T."/>
            <person name="Scanlan E."/>
            <person name="Schleich S."/>
            <person name="Schroeter R."/>
            <person name="Scoffone F."/>
            <person name="Sekiguchi J."/>
            <person name="Sekowska A."/>
            <person name="Seror S.J."/>
            <person name="Serror P."/>
            <person name="Shin B.-S."/>
            <person name="Soldo B."/>
            <person name="Sorokin A."/>
            <person name="Tacconi E."/>
            <person name="Takagi T."/>
            <person name="Takahashi H."/>
            <person name="Takemaru K."/>
            <person name="Takeuchi M."/>
            <person name="Tamakoshi A."/>
            <person name="Tanaka T."/>
            <person name="Terpstra P."/>
            <person name="Tognoni A."/>
            <person name="Tosato V."/>
            <person name="Uchiyama S."/>
            <person name="Vandenbol M."/>
            <person name="Vannier F."/>
            <person name="Vassarotti A."/>
            <person name="Viari A."/>
            <person name="Wambutt R."/>
            <person name="Wedler E."/>
            <person name="Wedler H."/>
            <person name="Weitzenegger T."/>
            <person name="Winters P."/>
            <person name="Wipat A."/>
            <person name="Yamamoto H."/>
            <person name="Yamane K."/>
            <person name="Yasumoto K."/>
            <person name="Yata K."/>
            <person name="Yoshida K."/>
            <person name="Yoshikawa H.-F."/>
            <person name="Zumstein E."/>
            <person name="Yoshikawa H."/>
            <person name="Danchin A."/>
        </authorList>
    </citation>
    <scope>NUCLEOTIDE SEQUENCE [LARGE SCALE GENOMIC DNA]</scope>
    <source>
        <strain>168</strain>
    </source>
</reference>
<feature type="chain" id="PRO_0000166304" description="UPF0126 membrane protein YvgT">
    <location>
        <begin position="1"/>
        <end position="202"/>
    </location>
</feature>
<feature type="transmembrane region" description="Helical" evidence="1">
    <location>
        <begin position="3"/>
        <end position="23"/>
    </location>
</feature>
<feature type="transmembrane region" description="Helical" evidence="1">
    <location>
        <begin position="26"/>
        <end position="46"/>
    </location>
</feature>
<feature type="transmembrane region" description="Helical" evidence="1">
    <location>
        <begin position="63"/>
        <end position="83"/>
    </location>
</feature>
<feature type="transmembrane region" description="Helical" evidence="1">
    <location>
        <begin position="90"/>
        <end position="110"/>
    </location>
</feature>
<feature type="transmembrane region" description="Helical" evidence="1">
    <location>
        <begin position="113"/>
        <end position="133"/>
    </location>
</feature>
<feature type="transmembrane region" description="Helical" evidence="1">
    <location>
        <begin position="160"/>
        <end position="180"/>
    </location>
</feature>
<evidence type="ECO:0000255" key="1"/>
<evidence type="ECO:0000305" key="2"/>
<comment type="subcellular location">
    <subcellularLocation>
        <location evidence="2">Cell membrane</location>
        <topology evidence="2">Multi-pass membrane protein</topology>
    </subcellularLocation>
</comment>
<comment type="similarity">
    <text evidence="2">Belongs to the UPF0126 family.</text>
</comment>
<protein>
    <recommendedName>
        <fullName>UPF0126 membrane protein YvgT</fullName>
    </recommendedName>
</protein>
<sequence length="202" mass="21716">MAWELLSVIGIIAFAVSGAIVAMEEEYDILGVYILGIVTAFGGGAIRNLLIGVPVSALWEQGAYFQIALLSITIVFLFPKLLLKHWNKWGNLSDAIGLAAFAIQGALYAVKMGHPLSAVIVAAVLTGSGGGIIRDLLAGRKPLVLKAEIYAVWAALGGLIVGLGWLGNSFGLYVLFFVLVVCRVCSYMFNWKLPNRSFRLDN</sequence>
<keyword id="KW-1003">Cell membrane</keyword>
<keyword id="KW-0472">Membrane</keyword>
<keyword id="KW-1185">Reference proteome</keyword>
<keyword id="KW-0812">Transmembrane</keyword>
<keyword id="KW-1133">Transmembrane helix</keyword>
<proteinExistence type="inferred from homology"/>
<organism>
    <name type="scientific">Bacillus subtilis (strain 168)</name>
    <dbReference type="NCBI Taxonomy" id="224308"/>
    <lineage>
        <taxon>Bacteria</taxon>
        <taxon>Bacillati</taxon>
        <taxon>Bacillota</taxon>
        <taxon>Bacilli</taxon>
        <taxon>Bacillales</taxon>
        <taxon>Bacillaceae</taxon>
        <taxon>Bacillus</taxon>
    </lineage>
</organism>